<feature type="chain" id="PRO_0000122312" description="Putative aminohydrolase MTH_994">
    <location>
        <begin position="1"/>
        <end position="384"/>
    </location>
</feature>
<feature type="binding site" evidence="1">
    <location>
        <position position="60"/>
    </location>
    <ligand>
        <name>Zn(2+)</name>
        <dbReference type="ChEBI" id="CHEBI:29105"/>
    </ligand>
</feature>
<feature type="binding site" evidence="1">
    <location>
        <position position="62"/>
    </location>
    <ligand>
        <name>Zn(2+)</name>
        <dbReference type="ChEBI" id="CHEBI:29105"/>
    </ligand>
</feature>
<feature type="binding site" evidence="1">
    <location>
        <position position="207"/>
    </location>
    <ligand>
        <name>Zn(2+)</name>
        <dbReference type="ChEBI" id="CHEBI:29105"/>
    </ligand>
</feature>
<feature type="binding site" evidence="1">
    <location>
        <position position="291"/>
    </location>
    <ligand>
        <name>Zn(2+)</name>
        <dbReference type="ChEBI" id="CHEBI:29105"/>
    </ligand>
</feature>
<proteinExistence type="inferred from homology"/>
<dbReference type="EC" id="3.-.-.-"/>
<dbReference type="EMBL" id="AE000666">
    <property type="protein sequence ID" value="AAB85491.1"/>
    <property type="molecule type" value="Genomic_DNA"/>
</dbReference>
<dbReference type="PIR" id="B69233">
    <property type="entry name" value="B69233"/>
</dbReference>
<dbReference type="SMR" id="O27075"/>
<dbReference type="FunCoup" id="O27075">
    <property type="interactions" value="1"/>
</dbReference>
<dbReference type="STRING" id="187420.MTH_994"/>
<dbReference type="PaxDb" id="187420-MTH_994"/>
<dbReference type="EnsemblBacteria" id="AAB85491">
    <property type="protein sequence ID" value="AAB85491"/>
    <property type="gene ID" value="MTH_994"/>
</dbReference>
<dbReference type="KEGG" id="mth:MTH_994"/>
<dbReference type="PATRIC" id="fig|187420.15.peg.977"/>
<dbReference type="HOGENOM" id="CLU_012358_1_0_2"/>
<dbReference type="InParanoid" id="O27075"/>
<dbReference type="Proteomes" id="UP000005223">
    <property type="component" value="Chromosome"/>
</dbReference>
<dbReference type="GO" id="GO:0016810">
    <property type="term" value="F:hydrolase activity, acting on carbon-nitrogen (but not peptide) bonds"/>
    <property type="evidence" value="ECO:0007669"/>
    <property type="project" value="InterPro"/>
</dbReference>
<dbReference type="GO" id="GO:0046872">
    <property type="term" value="F:metal ion binding"/>
    <property type="evidence" value="ECO:0007669"/>
    <property type="project" value="UniProtKB-KW"/>
</dbReference>
<dbReference type="CDD" id="cd01305">
    <property type="entry name" value="archeal_chlorohydrolases"/>
    <property type="match status" value="1"/>
</dbReference>
<dbReference type="Gene3D" id="3.20.20.140">
    <property type="entry name" value="Metal-dependent hydrolases"/>
    <property type="match status" value="1"/>
</dbReference>
<dbReference type="InterPro" id="IPR006680">
    <property type="entry name" value="Amidohydro-rel"/>
</dbReference>
<dbReference type="InterPro" id="IPR011059">
    <property type="entry name" value="Metal-dep_hydrolase_composite"/>
</dbReference>
<dbReference type="InterPro" id="IPR032466">
    <property type="entry name" value="Metal_Hydrolase"/>
</dbReference>
<dbReference type="InterPro" id="IPR050287">
    <property type="entry name" value="MTA/SAH_deaminase"/>
</dbReference>
<dbReference type="NCBIfam" id="NF005552">
    <property type="entry name" value="PRK07213.1"/>
    <property type="match status" value="1"/>
</dbReference>
<dbReference type="PANTHER" id="PTHR43794">
    <property type="entry name" value="AMINOHYDROLASE SSNA-RELATED"/>
    <property type="match status" value="1"/>
</dbReference>
<dbReference type="PANTHER" id="PTHR43794:SF5">
    <property type="entry name" value="CHLOROHYDROLASE FAMILY PROTEIN"/>
    <property type="match status" value="1"/>
</dbReference>
<dbReference type="Pfam" id="PF01979">
    <property type="entry name" value="Amidohydro_1"/>
    <property type="match status" value="1"/>
</dbReference>
<dbReference type="SUPFAM" id="SSF51338">
    <property type="entry name" value="Composite domain of metallo-dependent hydrolases"/>
    <property type="match status" value="1"/>
</dbReference>
<dbReference type="SUPFAM" id="SSF51556">
    <property type="entry name" value="Metallo-dependent hydrolases"/>
    <property type="match status" value="1"/>
</dbReference>
<protein>
    <recommendedName>
        <fullName>Putative aminohydrolase MTH_994</fullName>
        <ecNumber>3.-.-.-</ecNumber>
    </recommendedName>
</protein>
<keyword id="KW-0378">Hydrolase</keyword>
<keyword id="KW-0479">Metal-binding</keyword>
<keyword id="KW-1185">Reference proteome</keyword>
<keyword id="KW-0862">Zinc</keyword>
<evidence type="ECO:0000255" key="1"/>
<evidence type="ECO:0000305" key="2"/>
<organism>
    <name type="scientific">Methanothermobacter thermautotrophicus (strain ATCC 29096 / DSM 1053 / JCM 10044 / NBRC 100330 / Delta H)</name>
    <name type="common">Methanobacterium thermoautotrophicum</name>
    <dbReference type="NCBI Taxonomy" id="187420"/>
    <lineage>
        <taxon>Archaea</taxon>
        <taxon>Methanobacteriati</taxon>
        <taxon>Methanobacteriota</taxon>
        <taxon>Methanomada group</taxon>
        <taxon>Methanobacteria</taxon>
        <taxon>Methanobacteriales</taxon>
        <taxon>Methanobacteriaceae</taxon>
        <taxon>Methanothermobacter</taxon>
    </lineage>
</organism>
<comment type="similarity">
    <text evidence="2">Belongs to the metallo-dependent hydrolases superfamily. ATZ/TRZ family.</text>
</comment>
<name>Y994_METTH</name>
<sequence>MNMLVVENGTILRGPELTPQRKNLVIEDGIIKEITDERAPSGERIDASKLMVCPALVNSHVHIGDSVALDVGDGRPLEDIVRPPNGLKHRILESSPPGMLMEAMRNSARDMITHGIGSFIDYREGGPEGVELLREAIGDLPISGIILGRDPVVFDQEASRAEIRRRVRGVLRVSDGFAPSGMGEITDETASIIVEECERAGKIASIHVAEHRESQRRSLEDTGMSEVERALNAGFKLLVHLTNPVREDLKLVRESGASVVLCPRSNGALSSGIPPIRRMHELGINLLLGTDNLMFNSPDMLREMEYTLKVTRGCARRYFPPVEVLRMATSNTSAFTGTGVIEEGFPADLILVEKLSGDPYLSIINRTESKNIIYLIIKGKLVKR</sequence>
<accession>O27075</accession>
<gene>
    <name type="ordered locus">MTH_994</name>
</gene>
<reference key="1">
    <citation type="journal article" date="1997" name="J. Bacteriol.">
        <title>Complete genome sequence of Methanobacterium thermoautotrophicum deltaH: functional analysis and comparative genomics.</title>
        <authorList>
            <person name="Smith D.R."/>
            <person name="Doucette-Stamm L.A."/>
            <person name="Deloughery C."/>
            <person name="Lee H.-M."/>
            <person name="Dubois J."/>
            <person name="Aldredge T."/>
            <person name="Bashirzadeh R."/>
            <person name="Blakely D."/>
            <person name="Cook R."/>
            <person name="Gilbert K."/>
            <person name="Harrison D."/>
            <person name="Hoang L."/>
            <person name="Keagle P."/>
            <person name="Lumm W."/>
            <person name="Pothier B."/>
            <person name="Qiu D."/>
            <person name="Spadafora R."/>
            <person name="Vicare R."/>
            <person name="Wang Y."/>
            <person name="Wierzbowski J."/>
            <person name="Gibson R."/>
            <person name="Jiwani N."/>
            <person name="Caruso A."/>
            <person name="Bush D."/>
            <person name="Safer H."/>
            <person name="Patwell D."/>
            <person name="Prabhakar S."/>
            <person name="McDougall S."/>
            <person name="Shimer G."/>
            <person name="Goyal A."/>
            <person name="Pietrovski S."/>
            <person name="Church G.M."/>
            <person name="Daniels C.J."/>
            <person name="Mao J.-I."/>
            <person name="Rice P."/>
            <person name="Noelling J."/>
            <person name="Reeve J.N."/>
        </authorList>
    </citation>
    <scope>NUCLEOTIDE SEQUENCE [LARGE SCALE GENOMIC DNA]</scope>
    <source>
        <strain>ATCC 29096 / DSM 1053 / JCM 10044 / NBRC 100330 / Delta H</strain>
    </source>
</reference>